<protein>
    <recommendedName>
        <fullName evidence="1">Small ribosomal subunit protein uS11</fullName>
    </recommendedName>
    <alternativeName>
        <fullName evidence="2">30S ribosomal protein S11</fullName>
    </alternativeName>
</protein>
<feature type="chain" id="PRO_1000141124" description="Small ribosomal subunit protein uS11">
    <location>
        <begin position="1"/>
        <end position="127"/>
    </location>
</feature>
<accession>B4S5A3</accession>
<reference key="1">
    <citation type="submission" date="2008-06" db="EMBL/GenBank/DDBJ databases">
        <title>Complete sequence of chromosome of Prosthecochloris aestuarii DSM 271.</title>
        <authorList>
            <consortium name="US DOE Joint Genome Institute"/>
            <person name="Lucas S."/>
            <person name="Copeland A."/>
            <person name="Lapidus A."/>
            <person name="Glavina del Rio T."/>
            <person name="Dalin E."/>
            <person name="Tice H."/>
            <person name="Bruce D."/>
            <person name="Goodwin L."/>
            <person name="Pitluck S."/>
            <person name="Schmutz J."/>
            <person name="Larimer F."/>
            <person name="Land M."/>
            <person name="Hauser L."/>
            <person name="Kyrpides N."/>
            <person name="Anderson I."/>
            <person name="Liu Z."/>
            <person name="Li T."/>
            <person name="Zhao F."/>
            <person name="Overmann J."/>
            <person name="Bryant D.A."/>
            <person name="Richardson P."/>
        </authorList>
    </citation>
    <scope>NUCLEOTIDE SEQUENCE [LARGE SCALE GENOMIC DNA]</scope>
    <source>
        <strain>DSM 271 / SK 413</strain>
    </source>
</reference>
<name>RS11_PROA2</name>
<organism>
    <name type="scientific">Prosthecochloris aestuarii (strain DSM 271 / SK 413)</name>
    <dbReference type="NCBI Taxonomy" id="290512"/>
    <lineage>
        <taxon>Bacteria</taxon>
        <taxon>Pseudomonadati</taxon>
        <taxon>Chlorobiota</taxon>
        <taxon>Chlorobiia</taxon>
        <taxon>Chlorobiales</taxon>
        <taxon>Chlorobiaceae</taxon>
        <taxon>Prosthecochloris</taxon>
    </lineage>
</organism>
<proteinExistence type="inferred from homology"/>
<gene>
    <name evidence="1" type="primary">rpsK</name>
    <name type="ordered locus">Paes_2039</name>
</gene>
<sequence length="127" mass="13662">MATISRKKKKVKVTPEGAVHIKASFNNVLVTITDMQGNTVSWSSAGKNGFKGSKKNTPYASQVTSEAAAKEAFDLGMRYVHVFIKGPGSGRDAAIRALQGAGLDVKTIKDITPLPHNGCRPPKRRRV</sequence>
<keyword id="KW-0687">Ribonucleoprotein</keyword>
<keyword id="KW-0689">Ribosomal protein</keyword>
<keyword id="KW-0694">RNA-binding</keyword>
<keyword id="KW-0699">rRNA-binding</keyword>
<dbReference type="EMBL" id="CP001108">
    <property type="protein sequence ID" value="ACF47049.1"/>
    <property type="molecule type" value="Genomic_DNA"/>
</dbReference>
<dbReference type="RefSeq" id="WP_012506582.1">
    <property type="nucleotide sequence ID" value="NC_011059.1"/>
</dbReference>
<dbReference type="SMR" id="B4S5A3"/>
<dbReference type="STRING" id="290512.Paes_2039"/>
<dbReference type="KEGG" id="paa:Paes_2039"/>
<dbReference type="eggNOG" id="COG0100">
    <property type="taxonomic scope" value="Bacteria"/>
</dbReference>
<dbReference type="HOGENOM" id="CLU_072439_5_0_10"/>
<dbReference type="Proteomes" id="UP000002725">
    <property type="component" value="Chromosome"/>
</dbReference>
<dbReference type="GO" id="GO:1990904">
    <property type="term" value="C:ribonucleoprotein complex"/>
    <property type="evidence" value="ECO:0007669"/>
    <property type="project" value="UniProtKB-KW"/>
</dbReference>
<dbReference type="GO" id="GO:0005840">
    <property type="term" value="C:ribosome"/>
    <property type="evidence" value="ECO:0007669"/>
    <property type="project" value="UniProtKB-KW"/>
</dbReference>
<dbReference type="GO" id="GO:0019843">
    <property type="term" value="F:rRNA binding"/>
    <property type="evidence" value="ECO:0007669"/>
    <property type="project" value="UniProtKB-UniRule"/>
</dbReference>
<dbReference type="GO" id="GO:0003735">
    <property type="term" value="F:structural constituent of ribosome"/>
    <property type="evidence" value="ECO:0007669"/>
    <property type="project" value="InterPro"/>
</dbReference>
<dbReference type="GO" id="GO:0006412">
    <property type="term" value="P:translation"/>
    <property type="evidence" value="ECO:0007669"/>
    <property type="project" value="UniProtKB-UniRule"/>
</dbReference>
<dbReference type="FunFam" id="3.30.420.80:FF:000004">
    <property type="entry name" value="30S ribosomal protein S11"/>
    <property type="match status" value="1"/>
</dbReference>
<dbReference type="Gene3D" id="3.30.420.80">
    <property type="entry name" value="Ribosomal protein S11"/>
    <property type="match status" value="1"/>
</dbReference>
<dbReference type="HAMAP" id="MF_01310">
    <property type="entry name" value="Ribosomal_uS11"/>
    <property type="match status" value="1"/>
</dbReference>
<dbReference type="InterPro" id="IPR001971">
    <property type="entry name" value="Ribosomal_uS11"/>
</dbReference>
<dbReference type="InterPro" id="IPR019981">
    <property type="entry name" value="Ribosomal_uS11_bac-type"/>
</dbReference>
<dbReference type="InterPro" id="IPR018102">
    <property type="entry name" value="Ribosomal_uS11_CS"/>
</dbReference>
<dbReference type="InterPro" id="IPR036967">
    <property type="entry name" value="Ribosomal_uS11_sf"/>
</dbReference>
<dbReference type="NCBIfam" id="NF003698">
    <property type="entry name" value="PRK05309.1"/>
    <property type="match status" value="1"/>
</dbReference>
<dbReference type="NCBIfam" id="TIGR03632">
    <property type="entry name" value="uS11_bact"/>
    <property type="match status" value="1"/>
</dbReference>
<dbReference type="PANTHER" id="PTHR11759">
    <property type="entry name" value="40S RIBOSOMAL PROTEIN S14/30S RIBOSOMAL PROTEIN S11"/>
    <property type="match status" value="1"/>
</dbReference>
<dbReference type="Pfam" id="PF00411">
    <property type="entry name" value="Ribosomal_S11"/>
    <property type="match status" value="1"/>
</dbReference>
<dbReference type="PIRSF" id="PIRSF002131">
    <property type="entry name" value="Ribosomal_S11"/>
    <property type="match status" value="1"/>
</dbReference>
<dbReference type="SUPFAM" id="SSF53137">
    <property type="entry name" value="Translational machinery components"/>
    <property type="match status" value="1"/>
</dbReference>
<dbReference type="PROSITE" id="PS00054">
    <property type="entry name" value="RIBOSOMAL_S11"/>
    <property type="match status" value="1"/>
</dbReference>
<evidence type="ECO:0000255" key="1">
    <source>
        <dbReference type="HAMAP-Rule" id="MF_01310"/>
    </source>
</evidence>
<evidence type="ECO:0000305" key="2"/>
<comment type="function">
    <text evidence="1">Located on the platform of the 30S subunit, it bridges several disparate RNA helices of the 16S rRNA. Forms part of the Shine-Dalgarno cleft in the 70S ribosome.</text>
</comment>
<comment type="subunit">
    <text evidence="1">Part of the 30S ribosomal subunit. Interacts with proteins S7 and S18. Binds to IF-3.</text>
</comment>
<comment type="similarity">
    <text evidence="1">Belongs to the universal ribosomal protein uS11 family.</text>
</comment>